<accession>A6Q6M8</accession>
<keyword id="KW-0067">ATP-binding</keyword>
<keyword id="KW-0133">Cell shape</keyword>
<keyword id="KW-0961">Cell wall biogenesis/degradation</keyword>
<keyword id="KW-0963">Cytoplasm</keyword>
<keyword id="KW-0436">Ligase</keyword>
<keyword id="KW-0460">Magnesium</keyword>
<keyword id="KW-0464">Manganese</keyword>
<keyword id="KW-0479">Metal-binding</keyword>
<keyword id="KW-0547">Nucleotide-binding</keyword>
<keyword id="KW-0573">Peptidoglycan synthesis</keyword>
<evidence type="ECO:0000250" key="1"/>
<evidence type="ECO:0000255" key="2">
    <source>
        <dbReference type="HAMAP-Rule" id="MF_00047"/>
    </source>
</evidence>
<name>DDL_SULNB</name>
<comment type="function">
    <text evidence="2">Cell wall formation.</text>
</comment>
<comment type="catalytic activity">
    <reaction evidence="2">
        <text>2 D-alanine + ATP = D-alanyl-D-alanine + ADP + phosphate + H(+)</text>
        <dbReference type="Rhea" id="RHEA:11224"/>
        <dbReference type="ChEBI" id="CHEBI:15378"/>
        <dbReference type="ChEBI" id="CHEBI:30616"/>
        <dbReference type="ChEBI" id="CHEBI:43474"/>
        <dbReference type="ChEBI" id="CHEBI:57416"/>
        <dbReference type="ChEBI" id="CHEBI:57822"/>
        <dbReference type="ChEBI" id="CHEBI:456216"/>
        <dbReference type="EC" id="6.3.2.4"/>
    </reaction>
</comment>
<comment type="cofactor">
    <cofactor evidence="1">
        <name>Mg(2+)</name>
        <dbReference type="ChEBI" id="CHEBI:18420"/>
    </cofactor>
    <cofactor evidence="1">
        <name>Mn(2+)</name>
        <dbReference type="ChEBI" id="CHEBI:29035"/>
    </cofactor>
    <text evidence="1">Binds 2 magnesium or manganese ions per subunit.</text>
</comment>
<comment type="pathway">
    <text evidence="2">Cell wall biogenesis; peptidoglycan biosynthesis.</text>
</comment>
<comment type="subcellular location">
    <subcellularLocation>
        <location evidence="2">Cytoplasm</location>
    </subcellularLocation>
</comment>
<comment type="similarity">
    <text evidence="2">Belongs to the D-alanine--D-alanine ligase family.</text>
</comment>
<proteinExistence type="inferred from homology"/>
<feature type="chain" id="PRO_1000074801" description="D-alanine--D-alanine ligase">
    <location>
        <begin position="1"/>
        <end position="346"/>
    </location>
</feature>
<feature type="domain" description="ATP-grasp" evidence="2">
    <location>
        <begin position="134"/>
        <end position="340"/>
    </location>
</feature>
<feature type="binding site" evidence="2">
    <location>
        <begin position="161"/>
        <end position="212"/>
    </location>
    <ligand>
        <name>ATP</name>
        <dbReference type="ChEBI" id="CHEBI:30616"/>
    </ligand>
</feature>
<feature type="binding site" evidence="2">
    <location>
        <position position="284"/>
    </location>
    <ligand>
        <name>Mg(2+)</name>
        <dbReference type="ChEBI" id="CHEBI:18420"/>
        <label>1</label>
    </ligand>
</feature>
<feature type="binding site" evidence="2">
    <location>
        <position position="296"/>
    </location>
    <ligand>
        <name>Mg(2+)</name>
        <dbReference type="ChEBI" id="CHEBI:18420"/>
        <label>1</label>
    </ligand>
</feature>
<feature type="binding site" evidence="2">
    <location>
        <position position="296"/>
    </location>
    <ligand>
        <name>Mg(2+)</name>
        <dbReference type="ChEBI" id="CHEBI:18420"/>
        <label>2</label>
    </ligand>
</feature>
<feature type="binding site" evidence="2">
    <location>
        <position position="298"/>
    </location>
    <ligand>
        <name>Mg(2+)</name>
        <dbReference type="ChEBI" id="CHEBI:18420"/>
        <label>2</label>
    </ligand>
</feature>
<reference key="1">
    <citation type="journal article" date="2007" name="Proc. Natl. Acad. Sci. U.S.A.">
        <title>Deep-sea vent epsilon-proteobacterial genomes provide insights into emergence of pathogens.</title>
        <authorList>
            <person name="Nakagawa S."/>
            <person name="Takaki Y."/>
            <person name="Shimamura S."/>
            <person name="Reysenbach A.-L."/>
            <person name="Takai K."/>
            <person name="Horikoshi K."/>
        </authorList>
    </citation>
    <scope>NUCLEOTIDE SEQUENCE [LARGE SCALE GENOMIC DNA]</scope>
    <source>
        <strain>NBC37-1</strain>
    </source>
</reference>
<organism>
    <name type="scientific">Sulfurovum sp. (strain NBC37-1)</name>
    <dbReference type="NCBI Taxonomy" id="387093"/>
    <lineage>
        <taxon>Bacteria</taxon>
        <taxon>Pseudomonadati</taxon>
        <taxon>Campylobacterota</taxon>
        <taxon>Epsilonproteobacteria</taxon>
        <taxon>Campylobacterales</taxon>
        <taxon>Sulfurovaceae</taxon>
        <taxon>Sulfurovum</taxon>
    </lineage>
</organism>
<dbReference type="EC" id="6.3.2.4" evidence="2"/>
<dbReference type="EMBL" id="AP009179">
    <property type="protein sequence ID" value="BAF71137.1"/>
    <property type="molecule type" value="Genomic_DNA"/>
</dbReference>
<dbReference type="RefSeq" id="WP_011979870.1">
    <property type="nucleotide sequence ID" value="NC_009663.1"/>
</dbReference>
<dbReference type="SMR" id="A6Q6M8"/>
<dbReference type="STRING" id="387093.SUN_0177"/>
<dbReference type="KEGG" id="sun:SUN_0177"/>
<dbReference type="eggNOG" id="COG1181">
    <property type="taxonomic scope" value="Bacteria"/>
</dbReference>
<dbReference type="HOGENOM" id="CLU_039268_0_2_7"/>
<dbReference type="OrthoDB" id="9813261at2"/>
<dbReference type="UniPathway" id="UPA00219"/>
<dbReference type="Proteomes" id="UP000006378">
    <property type="component" value="Chromosome"/>
</dbReference>
<dbReference type="GO" id="GO:0005737">
    <property type="term" value="C:cytoplasm"/>
    <property type="evidence" value="ECO:0007669"/>
    <property type="project" value="UniProtKB-SubCell"/>
</dbReference>
<dbReference type="GO" id="GO:0005524">
    <property type="term" value="F:ATP binding"/>
    <property type="evidence" value="ECO:0007669"/>
    <property type="project" value="UniProtKB-KW"/>
</dbReference>
<dbReference type="GO" id="GO:0008716">
    <property type="term" value="F:D-alanine-D-alanine ligase activity"/>
    <property type="evidence" value="ECO:0007669"/>
    <property type="project" value="UniProtKB-UniRule"/>
</dbReference>
<dbReference type="GO" id="GO:0046872">
    <property type="term" value="F:metal ion binding"/>
    <property type="evidence" value="ECO:0007669"/>
    <property type="project" value="UniProtKB-KW"/>
</dbReference>
<dbReference type="GO" id="GO:0071555">
    <property type="term" value="P:cell wall organization"/>
    <property type="evidence" value="ECO:0007669"/>
    <property type="project" value="UniProtKB-KW"/>
</dbReference>
<dbReference type="GO" id="GO:0009252">
    <property type="term" value="P:peptidoglycan biosynthetic process"/>
    <property type="evidence" value="ECO:0007669"/>
    <property type="project" value="UniProtKB-UniRule"/>
</dbReference>
<dbReference type="GO" id="GO:0008360">
    <property type="term" value="P:regulation of cell shape"/>
    <property type="evidence" value="ECO:0007669"/>
    <property type="project" value="UniProtKB-KW"/>
</dbReference>
<dbReference type="Gene3D" id="3.40.50.20">
    <property type="match status" value="1"/>
</dbReference>
<dbReference type="Gene3D" id="3.30.1490.20">
    <property type="entry name" value="ATP-grasp fold, A domain"/>
    <property type="match status" value="1"/>
</dbReference>
<dbReference type="Gene3D" id="3.30.470.20">
    <property type="entry name" value="ATP-grasp fold, B domain"/>
    <property type="match status" value="1"/>
</dbReference>
<dbReference type="HAMAP" id="MF_00047">
    <property type="entry name" value="Dala_Dala_lig"/>
    <property type="match status" value="1"/>
</dbReference>
<dbReference type="InterPro" id="IPR011761">
    <property type="entry name" value="ATP-grasp"/>
</dbReference>
<dbReference type="InterPro" id="IPR013815">
    <property type="entry name" value="ATP_grasp_subdomain_1"/>
</dbReference>
<dbReference type="InterPro" id="IPR000291">
    <property type="entry name" value="D-Ala_lig_Van_CS"/>
</dbReference>
<dbReference type="InterPro" id="IPR005905">
    <property type="entry name" value="D_ala_D_ala"/>
</dbReference>
<dbReference type="InterPro" id="IPR011095">
    <property type="entry name" value="Dala_Dala_lig_C"/>
</dbReference>
<dbReference type="InterPro" id="IPR011127">
    <property type="entry name" value="Dala_Dala_lig_N"/>
</dbReference>
<dbReference type="InterPro" id="IPR016185">
    <property type="entry name" value="PreATP-grasp_dom_sf"/>
</dbReference>
<dbReference type="NCBIfam" id="TIGR01205">
    <property type="entry name" value="D_ala_D_alaTIGR"/>
    <property type="match status" value="1"/>
</dbReference>
<dbReference type="NCBIfam" id="NF002527">
    <property type="entry name" value="PRK01966.1-3"/>
    <property type="match status" value="1"/>
</dbReference>
<dbReference type="PANTHER" id="PTHR23132">
    <property type="entry name" value="D-ALANINE--D-ALANINE LIGASE"/>
    <property type="match status" value="1"/>
</dbReference>
<dbReference type="PANTHER" id="PTHR23132:SF23">
    <property type="entry name" value="D-ALANINE--D-ALANINE LIGASE B"/>
    <property type="match status" value="1"/>
</dbReference>
<dbReference type="Pfam" id="PF07478">
    <property type="entry name" value="Dala_Dala_lig_C"/>
    <property type="match status" value="1"/>
</dbReference>
<dbReference type="Pfam" id="PF01820">
    <property type="entry name" value="Dala_Dala_lig_N"/>
    <property type="match status" value="1"/>
</dbReference>
<dbReference type="SUPFAM" id="SSF56059">
    <property type="entry name" value="Glutathione synthetase ATP-binding domain-like"/>
    <property type="match status" value="1"/>
</dbReference>
<dbReference type="SUPFAM" id="SSF52440">
    <property type="entry name" value="PreATP-grasp domain"/>
    <property type="match status" value="1"/>
</dbReference>
<dbReference type="PROSITE" id="PS50975">
    <property type="entry name" value="ATP_GRASP"/>
    <property type="match status" value="1"/>
</dbReference>
<dbReference type="PROSITE" id="PS00843">
    <property type="entry name" value="DALA_DALA_LIGASE_1"/>
    <property type="match status" value="1"/>
</dbReference>
<dbReference type="PROSITE" id="PS00844">
    <property type="entry name" value="DALA_DALA_LIGASE_2"/>
    <property type="match status" value="1"/>
</dbReference>
<sequence length="346" mass="39235">MNIAILFGGSSFEHEISIVSAITMKKVLKKSTLTYIFVSADRKFYLIDTEKINSKLFSSGEYKKGKQLVLKNDGFFTKGMFGSKQVAFDVLLNLIHGRDGEDGKVASMMEFFNIPYISPRLEASAMSYNKLYTKFLAESLGVKTVPYEHLSKNGDRKISMEYPVIIKPVRLGSSIGVSIVKSEAELDYALDVAFEFDNDVIVEPFIDGVKEFNQAGCHTGDWELSIVEEPQKEEFLDFEKKYMDFSRDSQVLSADISEELKNNIQVTFKKIYDPLFMGSIIRCDFFVVNDEILLNEINPIPGSMANYLFPDFEGMVWRLSKALPKEKNISIDYTYIHSIQSAKGKA</sequence>
<protein>
    <recommendedName>
        <fullName evidence="2">D-alanine--D-alanine ligase</fullName>
        <ecNumber evidence="2">6.3.2.4</ecNumber>
    </recommendedName>
    <alternativeName>
        <fullName evidence="2">D-Ala-D-Ala ligase</fullName>
    </alternativeName>
    <alternativeName>
        <fullName evidence="2">D-alanylalanine synthetase</fullName>
    </alternativeName>
</protein>
<gene>
    <name evidence="2" type="primary">ddl</name>
    <name type="ordered locus">SUN_0177</name>
</gene>